<gene>
    <name evidence="1" type="primary">cysS</name>
    <name type="ordered locus">YpAngola_A1278</name>
</gene>
<name>SYC_YERPG</name>
<sequence length="461" mass="52162">MLKIFNTLSRQKEEFKPIHAGKVGMYVCGITIYDLCHIGHGRTFVAFDVVARYLRYLGYSLTYVRNVTDVDDKIIKRAIENNETCEQLTTRMLAEMHKDFDALNLERPDLEPRATHHIAEIIEMTERLIARGHAYVASNGDVMFAVDSDPDYGVLSRQDLDQLQAGARVEVADVKRNPMDFVLWKMSKPGEPRWESPWGPGRPGWHIECSAMNGKQLGAHFDIHGGGSDLMFPHHENEIAQSTCAHDGPYVNYWMHSGMVMIDKEKMSKSLNNFFTIRDVLAYYDAETVRYFLMSGHYRSQLNYSEENLKQARASLERLYTALRGTDANATPAGGAEFEARFRTAMDDDFNTPEAYSVLFDIAREVNRLKNEDMAAANGLAAELRKLAQVLGLLEQDPELFLQGGAQADDDEVAKIEALIKQRNDARSSKNWALADAARDQLNELGIVLEDGPQGTTWRRK</sequence>
<dbReference type="EC" id="6.1.1.16" evidence="1"/>
<dbReference type="EMBL" id="CP000901">
    <property type="protein sequence ID" value="ABX88133.1"/>
    <property type="molecule type" value="Genomic_DNA"/>
</dbReference>
<dbReference type="RefSeq" id="WP_002222677.1">
    <property type="nucleotide sequence ID" value="NZ_CP009935.1"/>
</dbReference>
<dbReference type="SMR" id="A9R253"/>
<dbReference type="GeneID" id="57975631"/>
<dbReference type="KEGG" id="ypg:YpAngola_A1278"/>
<dbReference type="PATRIC" id="fig|349746.12.peg.2239"/>
<dbReference type="GO" id="GO:0005829">
    <property type="term" value="C:cytosol"/>
    <property type="evidence" value="ECO:0007669"/>
    <property type="project" value="TreeGrafter"/>
</dbReference>
<dbReference type="GO" id="GO:0005524">
    <property type="term" value="F:ATP binding"/>
    <property type="evidence" value="ECO:0007669"/>
    <property type="project" value="UniProtKB-UniRule"/>
</dbReference>
<dbReference type="GO" id="GO:0004817">
    <property type="term" value="F:cysteine-tRNA ligase activity"/>
    <property type="evidence" value="ECO:0007669"/>
    <property type="project" value="UniProtKB-UniRule"/>
</dbReference>
<dbReference type="GO" id="GO:0008270">
    <property type="term" value="F:zinc ion binding"/>
    <property type="evidence" value="ECO:0007669"/>
    <property type="project" value="UniProtKB-UniRule"/>
</dbReference>
<dbReference type="GO" id="GO:0006423">
    <property type="term" value="P:cysteinyl-tRNA aminoacylation"/>
    <property type="evidence" value="ECO:0007669"/>
    <property type="project" value="UniProtKB-UniRule"/>
</dbReference>
<dbReference type="CDD" id="cd07963">
    <property type="entry name" value="Anticodon_Ia_Cys"/>
    <property type="match status" value="1"/>
</dbReference>
<dbReference type="CDD" id="cd00672">
    <property type="entry name" value="CysRS_core"/>
    <property type="match status" value="1"/>
</dbReference>
<dbReference type="FunFam" id="1.20.120.1910:FF:000001">
    <property type="entry name" value="Cysteine--tRNA ligase"/>
    <property type="match status" value="1"/>
</dbReference>
<dbReference type="FunFam" id="3.40.50.620:FF:000009">
    <property type="entry name" value="Cysteine--tRNA ligase"/>
    <property type="match status" value="1"/>
</dbReference>
<dbReference type="Gene3D" id="1.20.120.1910">
    <property type="entry name" value="Cysteine-tRNA ligase, C-terminal anti-codon recognition domain"/>
    <property type="match status" value="1"/>
</dbReference>
<dbReference type="Gene3D" id="3.40.50.620">
    <property type="entry name" value="HUPs"/>
    <property type="match status" value="1"/>
</dbReference>
<dbReference type="HAMAP" id="MF_00041">
    <property type="entry name" value="Cys_tRNA_synth"/>
    <property type="match status" value="1"/>
</dbReference>
<dbReference type="InterPro" id="IPR015803">
    <property type="entry name" value="Cys-tRNA-ligase"/>
</dbReference>
<dbReference type="InterPro" id="IPR015273">
    <property type="entry name" value="Cys-tRNA-synt_Ia_DALR"/>
</dbReference>
<dbReference type="InterPro" id="IPR024909">
    <property type="entry name" value="Cys-tRNA/MSH_ligase"/>
</dbReference>
<dbReference type="InterPro" id="IPR056411">
    <property type="entry name" value="CysS_C"/>
</dbReference>
<dbReference type="InterPro" id="IPR014729">
    <property type="entry name" value="Rossmann-like_a/b/a_fold"/>
</dbReference>
<dbReference type="InterPro" id="IPR032678">
    <property type="entry name" value="tRNA-synt_1_cat_dom"/>
</dbReference>
<dbReference type="InterPro" id="IPR009080">
    <property type="entry name" value="tRNAsynth_Ia_anticodon-bd"/>
</dbReference>
<dbReference type="NCBIfam" id="TIGR00435">
    <property type="entry name" value="cysS"/>
    <property type="match status" value="1"/>
</dbReference>
<dbReference type="PANTHER" id="PTHR10890:SF3">
    <property type="entry name" value="CYSTEINE--TRNA LIGASE, CYTOPLASMIC"/>
    <property type="match status" value="1"/>
</dbReference>
<dbReference type="PANTHER" id="PTHR10890">
    <property type="entry name" value="CYSTEINYL-TRNA SYNTHETASE"/>
    <property type="match status" value="1"/>
</dbReference>
<dbReference type="Pfam" id="PF23493">
    <property type="entry name" value="CysS_C"/>
    <property type="match status" value="1"/>
</dbReference>
<dbReference type="Pfam" id="PF09190">
    <property type="entry name" value="DALR_2"/>
    <property type="match status" value="1"/>
</dbReference>
<dbReference type="Pfam" id="PF01406">
    <property type="entry name" value="tRNA-synt_1e"/>
    <property type="match status" value="1"/>
</dbReference>
<dbReference type="PRINTS" id="PR00983">
    <property type="entry name" value="TRNASYNTHCYS"/>
</dbReference>
<dbReference type="SMART" id="SM00840">
    <property type="entry name" value="DALR_2"/>
    <property type="match status" value="1"/>
</dbReference>
<dbReference type="SUPFAM" id="SSF47323">
    <property type="entry name" value="Anticodon-binding domain of a subclass of class I aminoacyl-tRNA synthetases"/>
    <property type="match status" value="1"/>
</dbReference>
<dbReference type="SUPFAM" id="SSF52374">
    <property type="entry name" value="Nucleotidylyl transferase"/>
    <property type="match status" value="1"/>
</dbReference>
<feature type="chain" id="PRO_1000090888" description="Cysteine--tRNA ligase">
    <location>
        <begin position="1"/>
        <end position="461"/>
    </location>
</feature>
<feature type="short sequence motif" description="'HIGH' region">
    <location>
        <begin position="30"/>
        <end position="40"/>
    </location>
</feature>
<feature type="short sequence motif" description="'KMSKS' region">
    <location>
        <begin position="266"/>
        <end position="270"/>
    </location>
</feature>
<feature type="binding site" evidence="1">
    <location>
        <position position="28"/>
    </location>
    <ligand>
        <name>Zn(2+)</name>
        <dbReference type="ChEBI" id="CHEBI:29105"/>
    </ligand>
</feature>
<feature type="binding site" evidence="1">
    <location>
        <position position="209"/>
    </location>
    <ligand>
        <name>Zn(2+)</name>
        <dbReference type="ChEBI" id="CHEBI:29105"/>
    </ligand>
</feature>
<feature type="binding site" evidence="1">
    <location>
        <position position="234"/>
    </location>
    <ligand>
        <name>Zn(2+)</name>
        <dbReference type="ChEBI" id="CHEBI:29105"/>
    </ligand>
</feature>
<feature type="binding site" evidence="1">
    <location>
        <position position="238"/>
    </location>
    <ligand>
        <name>Zn(2+)</name>
        <dbReference type="ChEBI" id="CHEBI:29105"/>
    </ligand>
</feature>
<feature type="binding site" evidence="1">
    <location>
        <position position="269"/>
    </location>
    <ligand>
        <name>ATP</name>
        <dbReference type="ChEBI" id="CHEBI:30616"/>
    </ligand>
</feature>
<proteinExistence type="inferred from homology"/>
<evidence type="ECO:0000255" key="1">
    <source>
        <dbReference type="HAMAP-Rule" id="MF_00041"/>
    </source>
</evidence>
<protein>
    <recommendedName>
        <fullName evidence="1">Cysteine--tRNA ligase</fullName>
        <ecNumber evidence="1">6.1.1.16</ecNumber>
    </recommendedName>
    <alternativeName>
        <fullName evidence="1">Cysteinyl-tRNA synthetase</fullName>
        <shortName evidence="1">CysRS</shortName>
    </alternativeName>
</protein>
<comment type="catalytic activity">
    <reaction evidence="1">
        <text>tRNA(Cys) + L-cysteine + ATP = L-cysteinyl-tRNA(Cys) + AMP + diphosphate</text>
        <dbReference type="Rhea" id="RHEA:17773"/>
        <dbReference type="Rhea" id="RHEA-COMP:9661"/>
        <dbReference type="Rhea" id="RHEA-COMP:9679"/>
        <dbReference type="ChEBI" id="CHEBI:30616"/>
        <dbReference type="ChEBI" id="CHEBI:33019"/>
        <dbReference type="ChEBI" id="CHEBI:35235"/>
        <dbReference type="ChEBI" id="CHEBI:78442"/>
        <dbReference type="ChEBI" id="CHEBI:78517"/>
        <dbReference type="ChEBI" id="CHEBI:456215"/>
        <dbReference type="EC" id="6.1.1.16"/>
    </reaction>
</comment>
<comment type="cofactor">
    <cofactor evidence="1">
        <name>Zn(2+)</name>
        <dbReference type="ChEBI" id="CHEBI:29105"/>
    </cofactor>
    <text evidence="1">Binds 1 zinc ion per subunit.</text>
</comment>
<comment type="subunit">
    <text evidence="1">Monomer.</text>
</comment>
<comment type="subcellular location">
    <subcellularLocation>
        <location evidence="1">Cytoplasm</location>
    </subcellularLocation>
</comment>
<comment type="similarity">
    <text evidence="1">Belongs to the class-I aminoacyl-tRNA synthetase family.</text>
</comment>
<organism>
    <name type="scientific">Yersinia pestis bv. Antiqua (strain Angola)</name>
    <dbReference type="NCBI Taxonomy" id="349746"/>
    <lineage>
        <taxon>Bacteria</taxon>
        <taxon>Pseudomonadati</taxon>
        <taxon>Pseudomonadota</taxon>
        <taxon>Gammaproteobacteria</taxon>
        <taxon>Enterobacterales</taxon>
        <taxon>Yersiniaceae</taxon>
        <taxon>Yersinia</taxon>
    </lineage>
</organism>
<accession>A9R253</accession>
<reference key="1">
    <citation type="journal article" date="2010" name="J. Bacteriol.">
        <title>Genome sequence of the deep-rooted Yersinia pestis strain Angola reveals new insights into the evolution and pangenome of the plague bacterium.</title>
        <authorList>
            <person name="Eppinger M."/>
            <person name="Worsham P.L."/>
            <person name="Nikolich M.P."/>
            <person name="Riley D.R."/>
            <person name="Sebastian Y."/>
            <person name="Mou S."/>
            <person name="Achtman M."/>
            <person name="Lindler L.E."/>
            <person name="Ravel J."/>
        </authorList>
    </citation>
    <scope>NUCLEOTIDE SEQUENCE [LARGE SCALE GENOMIC DNA]</scope>
    <source>
        <strain>Angola</strain>
    </source>
</reference>
<keyword id="KW-0030">Aminoacyl-tRNA synthetase</keyword>
<keyword id="KW-0067">ATP-binding</keyword>
<keyword id="KW-0963">Cytoplasm</keyword>
<keyword id="KW-0436">Ligase</keyword>
<keyword id="KW-0479">Metal-binding</keyword>
<keyword id="KW-0547">Nucleotide-binding</keyword>
<keyword id="KW-0648">Protein biosynthesis</keyword>
<keyword id="KW-0862">Zinc</keyword>